<proteinExistence type="inferred from homology"/>
<reference key="1">
    <citation type="journal article" date="1998" name="Mol. Phylogenet. Evol.">
        <title>Weighting and congruence: a case study based on three mitochondrial genes in pitvipers.</title>
        <authorList>
            <person name="Vidal N."/>
            <person name="Lecointre G."/>
        </authorList>
    </citation>
    <scope>NUCLEOTIDE SEQUENCE [GENOMIC DNA]</scope>
</reference>
<reference key="2">
    <citation type="journal article" date="1997" name="C. R. Acad. Sci. III, Sci. Vie">
        <title>Molecular systematics of pitvipers: paraphyly of the Bothrops complex.</title>
        <authorList>
            <person name="Vidal N."/>
            <person name="Lecointre G."/>
            <person name="Vie J.-C."/>
            <person name="Gasc J.-P."/>
        </authorList>
    </citation>
    <scope>NUCLEOTIDE SEQUENCE [GENOMIC DNA] OF 1-132</scope>
</reference>
<comment type="function">
    <text evidence="2">Component of the ubiquinol-cytochrome c reductase complex (complex III or cytochrome b-c1 complex) that is part of the mitochondrial respiratory chain. The b-c1 complex mediates electron transfer from ubiquinol to cytochrome c. Contributes to the generation of a proton gradient across the mitochondrial membrane that is then used for ATP synthesis.</text>
</comment>
<comment type="cofactor">
    <cofactor evidence="2">
        <name>heme b</name>
        <dbReference type="ChEBI" id="CHEBI:60344"/>
    </cofactor>
    <text evidence="2">Binds 2 heme b groups non-covalently.</text>
</comment>
<comment type="subunit">
    <text evidence="2">The cytochrome bc1 complex contains 3 respiratory subunits (MT-CYB, CYC1 and UQCRFS1), 2 core proteins (UQCRC1 and UQCRC2) and probably 6 low-molecular weight proteins.</text>
</comment>
<comment type="subcellular location">
    <subcellularLocation>
        <location evidence="2">Mitochondrion inner membrane</location>
        <topology evidence="2">Multi-pass membrane protein</topology>
    </subcellularLocation>
</comment>
<comment type="miscellaneous">
    <text evidence="1">Heme 1 (or BL or b562) is low-potential and absorbs at about 562 nm, and heme 2 (or BH or b566) is high-potential and absorbs at about 566 nm.</text>
</comment>
<comment type="similarity">
    <text evidence="3">Belongs to the cytochrome b family.</text>
</comment>
<comment type="caution">
    <text evidence="2">The full-length protein contains only eight transmembrane helices, not nine as predicted by bioinformatics tools.</text>
</comment>
<dbReference type="EMBL" id="AF039271">
    <property type="protein sequence ID" value="AAC33548.1"/>
    <property type="molecule type" value="Genomic_DNA"/>
</dbReference>
<dbReference type="SMR" id="P92852"/>
<dbReference type="GO" id="GO:0005743">
    <property type="term" value="C:mitochondrial inner membrane"/>
    <property type="evidence" value="ECO:0007669"/>
    <property type="project" value="UniProtKB-SubCell"/>
</dbReference>
<dbReference type="GO" id="GO:0046872">
    <property type="term" value="F:metal ion binding"/>
    <property type="evidence" value="ECO:0007669"/>
    <property type="project" value="UniProtKB-KW"/>
</dbReference>
<dbReference type="GO" id="GO:0008121">
    <property type="term" value="F:ubiquinol-cytochrome-c reductase activity"/>
    <property type="evidence" value="ECO:0007669"/>
    <property type="project" value="TreeGrafter"/>
</dbReference>
<dbReference type="GO" id="GO:0006122">
    <property type="term" value="P:mitochondrial electron transport, ubiquinol to cytochrome c"/>
    <property type="evidence" value="ECO:0007669"/>
    <property type="project" value="TreeGrafter"/>
</dbReference>
<dbReference type="CDD" id="cd00284">
    <property type="entry name" value="Cytochrome_b_N"/>
    <property type="match status" value="1"/>
</dbReference>
<dbReference type="Gene3D" id="1.20.810.10">
    <property type="entry name" value="Cytochrome Bc1 Complex, Chain C"/>
    <property type="match status" value="1"/>
</dbReference>
<dbReference type="InterPro" id="IPR005797">
    <property type="entry name" value="Cyt_b/b6_N"/>
</dbReference>
<dbReference type="InterPro" id="IPR027387">
    <property type="entry name" value="Cytb/b6-like_sf"/>
</dbReference>
<dbReference type="InterPro" id="IPR048259">
    <property type="entry name" value="Cytochrome_b_N_euk/bac"/>
</dbReference>
<dbReference type="InterPro" id="IPR016174">
    <property type="entry name" value="Di-haem_cyt_TM"/>
</dbReference>
<dbReference type="PANTHER" id="PTHR19271">
    <property type="entry name" value="CYTOCHROME B"/>
    <property type="match status" value="1"/>
</dbReference>
<dbReference type="PANTHER" id="PTHR19271:SF16">
    <property type="entry name" value="CYTOCHROME B"/>
    <property type="match status" value="1"/>
</dbReference>
<dbReference type="Pfam" id="PF00033">
    <property type="entry name" value="Cytochrome_B"/>
    <property type="match status" value="1"/>
</dbReference>
<dbReference type="SUPFAM" id="SSF81342">
    <property type="entry name" value="Transmembrane di-heme cytochromes"/>
    <property type="match status" value="1"/>
</dbReference>
<dbReference type="PROSITE" id="PS51002">
    <property type="entry name" value="CYTB_NTER"/>
    <property type="match status" value="1"/>
</dbReference>
<protein>
    <recommendedName>
        <fullName>Cytochrome b</fullName>
    </recommendedName>
    <alternativeName>
        <fullName>Complex III subunit 3</fullName>
    </alternativeName>
    <alternativeName>
        <fullName>Complex III subunit III</fullName>
    </alternativeName>
    <alternativeName>
        <fullName>Cytochrome b-c1 complex subunit 3</fullName>
    </alternativeName>
    <alternativeName>
        <fullName>Ubiquinol-cytochrome-c reductase complex cytochrome b subunit</fullName>
    </alternativeName>
</protein>
<keyword id="KW-0249">Electron transport</keyword>
<keyword id="KW-0349">Heme</keyword>
<keyword id="KW-0408">Iron</keyword>
<keyword id="KW-0472">Membrane</keyword>
<keyword id="KW-0479">Metal-binding</keyword>
<keyword id="KW-0496">Mitochondrion</keyword>
<keyword id="KW-0999">Mitochondrion inner membrane</keyword>
<keyword id="KW-0679">Respiratory chain</keyword>
<keyword id="KW-0812">Transmembrane</keyword>
<keyword id="KW-1133">Transmembrane helix</keyword>
<keyword id="KW-0813">Transport</keyword>
<keyword id="KW-0830">Ubiquinone</keyword>
<organism>
    <name type="scientific">Gloydius blomhoffii</name>
    <name type="common">Mamushi</name>
    <name type="synonym">Agkistrodon halys blomhoffi</name>
    <dbReference type="NCBI Taxonomy" id="242054"/>
    <lineage>
        <taxon>Eukaryota</taxon>
        <taxon>Metazoa</taxon>
        <taxon>Chordata</taxon>
        <taxon>Craniata</taxon>
        <taxon>Vertebrata</taxon>
        <taxon>Euteleostomi</taxon>
        <taxon>Lepidosauria</taxon>
        <taxon>Squamata</taxon>
        <taxon>Bifurcata</taxon>
        <taxon>Unidentata</taxon>
        <taxon>Episquamata</taxon>
        <taxon>Toxicofera</taxon>
        <taxon>Serpentes</taxon>
        <taxon>Colubroidea</taxon>
        <taxon>Viperidae</taxon>
        <taxon>Crotalinae</taxon>
        <taxon>Gloydius</taxon>
    </lineage>
</organism>
<evidence type="ECO:0000250" key="1"/>
<evidence type="ECO:0000250" key="2">
    <source>
        <dbReference type="UniProtKB" id="P00157"/>
    </source>
</evidence>
<evidence type="ECO:0000255" key="3">
    <source>
        <dbReference type="PROSITE-ProRule" id="PRU00968"/>
    </source>
</evidence>
<sequence>YINYKNMSHQHMLMMFNLLPVGSNISIWWNFGSMLLTCLVIQIMTGFFLAFHYTANINLAFSSIIHTSRDVPYGWIMQNTHAIGASLFFICIYIHIARGIYYGSYLNKEVWVSGTTLLILLMATAFFGYVLPWGQMSFWAATVITNLLTAIPYFGTTLTTWLWGGFAINDPTLTRFFALHFILPFTIISASSIHILLLHNEGSNNPLGSNSDID</sequence>
<accession>P92852</accession>
<geneLocation type="mitochondrion"/>
<feature type="chain" id="PRO_0000060537" description="Cytochrome b">
    <location>
        <begin position="1" status="less than"/>
        <end position="214" status="greater than"/>
    </location>
</feature>
<feature type="transmembrane region" description="Helical" evidence="3">
    <location>
        <begin position="31"/>
        <end position="51"/>
    </location>
</feature>
<feature type="transmembrane region" description="Helical" evidence="2">
    <location>
        <begin position="75"/>
        <end position="96"/>
    </location>
</feature>
<feature type="transmembrane region" description="Helical" evidence="2">
    <location>
        <begin position="111"/>
        <end position="131"/>
    </location>
</feature>
<feature type="transmembrane region" description="Helical" evidence="3">
    <location>
        <begin position="176"/>
        <end position="196"/>
    </location>
</feature>
<feature type="binding site" description="axial binding residue" evidence="2">
    <location>
        <position position="81"/>
    </location>
    <ligand>
        <name>heme b</name>
        <dbReference type="ChEBI" id="CHEBI:60344"/>
        <label>b562</label>
    </ligand>
    <ligandPart>
        <name>Fe</name>
        <dbReference type="ChEBI" id="CHEBI:18248"/>
    </ligandPart>
</feature>
<feature type="binding site" description="axial binding residue" evidence="2">
    <location>
        <position position="95"/>
    </location>
    <ligand>
        <name>heme b</name>
        <dbReference type="ChEBI" id="CHEBI:60344"/>
        <label>b566</label>
    </ligand>
    <ligandPart>
        <name>Fe</name>
        <dbReference type="ChEBI" id="CHEBI:18248"/>
    </ligandPart>
</feature>
<feature type="binding site" description="axial binding residue" evidence="2">
    <location>
        <position position="180"/>
    </location>
    <ligand>
        <name>heme b</name>
        <dbReference type="ChEBI" id="CHEBI:60344"/>
        <label>b562</label>
    </ligand>
    <ligandPart>
        <name>Fe</name>
        <dbReference type="ChEBI" id="CHEBI:18248"/>
    </ligandPart>
</feature>
<feature type="binding site" description="axial binding residue" evidence="2">
    <location>
        <position position="194"/>
    </location>
    <ligand>
        <name>heme b</name>
        <dbReference type="ChEBI" id="CHEBI:60344"/>
        <label>b566</label>
    </ligand>
    <ligandPart>
        <name>Fe</name>
        <dbReference type="ChEBI" id="CHEBI:18248"/>
    </ligandPart>
</feature>
<feature type="binding site" evidence="2">
    <location>
        <position position="199"/>
    </location>
    <ligand>
        <name>a ubiquinone</name>
        <dbReference type="ChEBI" id="CHEBI:16389"/>
    </ligand>
</feature>
<feature type="non-terminal residue">
    <location>
        <position position="1"/>
    </location>
</feature>
<feature type="non-terminal residue">
    <location>
        <position position="214"/>
    </location>
</feature>
<gene>
    <name type="primary">MT-CYB</name>
    <name type="synonym">COB</name>
    <name type="synonym">CYTB</name>
    <name type="synonym">MTCYB</name>
</gene>
<name>CYB_GLOBL</name>